<accession>Q6BVZ7</accession>
<comment type="function">
    <text evidence="1">Acts as a sulfur carrier required for 2-thiolation of mcm(5)S(2)U at tRNA wobble positions of cytosolic tRNA(Lys), tRNA(Glu) and tRNA(Gln). Serves as sulfur donor in tRNA 2-thiolation reaction by being thiocarboxylated (-COSH) at its C-terminus by the MOCS3 homolog UBA4. The sulfur is then transferred to tRNA to form 2-thiolation of mcm(5)S(2)U. Prior mcm(5) tRNA modification by the elongator complex is required for 2-thiolation. Also acts as a ubiquitin-like protein (UBL) that is covalently conjugated via an isopeptide bond to lysine residues of target proteins such as AHP1. The thiocarboxylated form serves as substrate for conjugation and oxidative stress specifically induces the formation of UBL-protein conjugates.</text>
</comment>
<comment type="pathway">
    <text evidence="1">tRNA modification; 5-methoxycarbonylmethyl-2-thiouridine-tRNA biosynthesis.</text>
</comment>
<comment type="subcellular location">
    <subcellularLocation>
        <location evidence="1">Cytoplasm</location>
    </subcellularLocation>
</comment>
<comment type="PTM">
    <text evidence="1">C-terminal thiocarboxylation occurs in 2 steps, it is first acyl-adenylated (-COAMP) via the hesA/moeB/thiF part of UBA4, then thiocarboxylated (-COSH) via the rhodanese domain of UBA4.</text>
</comment>
<comment type="similarity">
    <text evidence="1">Belongs to the URM1 family.</text>
</comment>
<comment type="sequence caution" evidence="2">
    <conflict type="erroneous initiation">
        <sequence resource="EMBL-CDS" id="CAG85636"/>
    </conflict>
</comment>
<sequence>MGIKVKVEFLGGLDVISNGVREHKCEVPLEEGEATMIDLIKYITATIISDPKDVPVFIEEGTVRPGILVLINDTDWELEGMEDYVVESGDVLTFTSTLHGG</sequence>
<gene>
    <name evidence="1" type="primary">URM1</name>
    <name type="ordered locus">DEHA2B15466g</name>
</gene>
<name>URM1_DEBHA</name>
<evidence type="ECO:0000255" key="1">
    <source>
        <dbReference type="HAMAP-Rule" id="MF_03048"/>
    </source>
</evidence>
<evidence type="ECO:0000305" key="2"/>
<proteinExistence type="inferred from homology"/>
<keyword id="KW-0963">Cytoplasm</keyword>
<keyword id="KW-1017">Isopeptide bond</keyword>
<keyword id="KW-1185">Reference proteome</keyword>
<keyword id="KW-0819">tRNA processing</keyword>
<keyword id="KW-0833">Ubl conjugation pathway</keyword>
<reference key="1">
    <citation type="journal article" date="2004" name="Nature">
        <title>Genome evolution in yeasts.</title>
        <authorList>
            <person name="Dujon B."/>
            <person name="Sherman D."/>
            <person name="Fischer G."/>
            <person name="Durrens P."/>
            <person name="Casaregola S."/>
            <person name="Lafontaine I."/>
            <person name="de Montigny J."/>
            <person name="Marck C."/>
            <person name="Neuveglise C."/>
            <person name="Talla E."/>
            <person name="Goffard N."/>
            <person name="Frangeul L."/>
            <person name="Aigle M."/>
            <person name="Anthouard V."/>
            <person name="Babour A."/>
            <person name="Barbe V."/>
            <person name="Barnay S."/>
            <person name="Blanchin S."/>
            <person name="Beckerich J.-M."/>
            <person name="Beyne E."/>
            <person name="Bleykasten C."/>
            <person name="Boisrame A."/>
            <person name="Boyer J."/>
            <person name="Cattolico L."/>
            <person name="Confanioleri F."/>
            <person name="de Daruvar A."/>
            <person name="Despons L."/>
            <person name="Fabre E."/>
            <person name="Fairhead C."/>
            <person name="Ferry-Dumazet H."/>
            <person name="Groppi A."/>
            <person name="Hantraye F."/>
            <person name="Hennequin C."/>
            <person name="Jauniaux N."/>
            <person name="Joyet P."/>
            <person name="Kachouri R."/>
            <person name="Kerrest A."/>
            <person name="Koszul R."/>
            <person name="Lemaire M."/>
            <person name="Lesur I."/>
            <person name="Ma L."/>
            <person name="Muller H."/>
            <person name="Nicaud J.-M."/>
            <person name="Nikolski M."/>
            <person name="Oztas S."/>
            <person name="Ozier-Kalogeropoulos O."/>
            <person name="Pellenz S."/>
            <person name="Potier S."/>
            <person name="Richard G.-F."/>
            <person name="Straub M.-L."/>
            <person name="Suleau A."/>
            <person name="Swennen D."/>
            <person name="Tekaia F."/>
            <person name="Wesolowski-Louvel M."/>
            <person name="Westhof E."/>
            <person name="Wirth B."/>
            <person name="Zeniou-Meyer M."/>
            <person name="Zivanovic Y."/>
            <person name="Bolotin-Fukuhara M."/>
            <person name="Thierry A."/>
            <person name="Bouchier C."/>
            <person name="Caudron B."/>
            <person name="Scarpelli C."/>
            <person name="Gaillardin C."/>
            <person name="Weissenbach J."/>
            <person name="Wincker P."/>
            <person name="Souciet J.-L."/>
        </authorList>
    </citation>
    <scope>NUCLEOTIDE SEQUENCE [LARGE SCALE GENOMIC DNA]</scope>
    <source>
        <strain>ATCC 36239 / CBS 767 / BCRC 21394 / JCM 1990 / NBRC 0083 / IGC 2968</strain>
    </source>
</reference>
<feature type="chain" id="PRO_0000367881" description="Ubiquitin-related modifier 1">
    <location>
        <begin position="1"/>
        <end position="101"/>
    </location>
</feature>
<feature type="modified residue" description="1-thioglycine" evidence="1">
    <location>
        <position position="101"/>
    </location>
</feature>
<feature type="cross-link" description="Glycyl lysine isopeptide (Gly-Lys) (interchain with K-? in acceptor proteins)" evidence="1">
    <location>
        <position position="101"/>
    </location>
</feature>
<protein>
    <recommendedName>
        <fullName evidence="1">Ubiquitin-related modifier 1</fullName>
    </recommendedName>
</protein>
<dbReference type="EMBL" id="CR382134">
    <property type="protein sequence ID" value="CAG85636.2"/>
    <property type="status" value="ALT_INIT"/>
    <property type="molecule type" value="Genomic_DNA"/>
</dbReference>
<dbReference type="RefSeq" id="XP_457622.2">
    <property type="nucleotide sequence ID" value="XM_457622.2"/>
</dbReference>
<dbReference type="SMR" id="Q6BVZ7"/>
<dbReference type="FunCoup" id="Q6BVZ7">
    <property type="interactions" value="927"/>
</dbReference>
<dbReference type="STRING" id="284592.Q6BVZ7"/>
<dbReference type="GeneID" id="2913597"/>
<dbReference type="KEGG" id="dha:DEHA2B15466g"/>
<dbReference type="eggNOG" id="KOG4146">
    <property type="taxonomic scope" value="Eukaryota"/>
</dbReference>
<dbReference type="HOGENOM" id="CLU_148208_0_0_1"/>
<dbReference type="InParanoid" id="Q6BVZ7"/>
<dbReference type="OrthoDB" id="10248987at2759"/>
<dbReference type="UniPathway" id="UPA00988"/>
<dbReference type="Proteomes" id="UP000000599">
    <property type="component" value="Chromosome B"/>
</dbReference>
<dbReference type="GO" id="GO:0005829">
    <property type="term" value="C:cytosol"/>
    <property type="evidence" value="ECO:0007669"/>
    <property type="project" value="UniProtKB-UniRule"/>
</dbReference>
<dbReference type="GO" id="GO:0032447">
    <property type="term" value="P:protein urmylation"/>
    <property type="evidence" value="ECO:0007669"/>
    <property type="project" value="UniProtKB-UniRule"/>
</dbReference>
<dbReference type="GO" id="GO:0034227">
    <property type="term" value="P:tRNA thio-modification"/>
    <property type="evidence" value="ECO:0007669"/>
    <property type="project" value="UniProtKB-UniRule"/>
</dbReference>
<dbReference type="GO" id="GO:0002098">
    <property type="term" value="P:tRNA wobble uridine modification"/>
    <property type="evidence" value="ECO:0007669"/>
    <property type="project" value="UniProtKB-UniRule"/>
</dbReference>
<dbReference type="CDD" id="cd01764">
    <property type="entry name" value="Ubl_Urm1"/>
    <property type="match status" value="1"/>
</dbReference>
<dbReference type="Gene3D" id="3.10.20.30">
    <property type="match status" value="1"/>
</dbReference>
<dbReference type="HAMAP" id="MF_03048">
    <property type="entry name" value="Urm1"/>
    <property type="match status" value="1"/>
</dbReference>
<dbReference type="InterPro" id="IPR012675">
    <property type="entry name" value="Beta-grasp_dom_sf"/>
</dbReference>
<dbReference type="InterPro" id="IPR016155">
    <property type="entry name" value="Mopterin_synth/thiamin_S_b"/>
</dbReference>
<dbReference type="InterPro" id="IPR015221">
    <property type="entry name" value="Urm1"/>
</dbReference>
<dbReference type="PANTHER" id="PTHR14986">
    <property type="entry name" value="RURM1 PROTEIN"/>
    <property type="match status" value="1"/>
</dbReference>
<dbReference type="Pfam" id="PF09138">
    <property type="entry name" value="Urm1"/>
    <property type="match status" value="1"/>
</dbReference>
<dbReference type="PIRSF" id="PIRSF037379">
    <property type="entry name" value="Ubiquitin-related_modifier_1"/>
    <property type="match status" value="1"/>
</dbReference>
<dbReference type="SUPFAM" id="SSF54285">
    <property type="entry name" value="MoaD/ThiS"/>
    <property type="match status" value="1"/>
</dbReference>
<organism>
    <name type="scientific">Debaryomyces hansenii (strain ATCC 36239 / CBS 767 / BCRC 21394 / JCM 1990 / NBRC 0083 / IGC 2968)</name>
    <name type="common">Yeast</name>
    <name type="synonym">Torulaspora hansenii</name>
    <dbReference type="NCBI Taxonomy" id="284592"/>
    <lineage>
        <taxon>Eukaryota</taxon>
        <taxon>Fungi</taxon>
        <taxon>Dikarya</taxon>
        <taxon>Ascomycota</taxon>
        <taxon>Saccharomycotina</taxon>
        <taxon>Pichiomycetes</taxon>
        <taxon>Debaryomycetaceae</taxon>
        <taxon>Debaryomyces</taxon>
    </lineage>
</organism>